<comment type="function">
    <text evidence="1">Transcription regulator.</text>
</comment>
<comment type="subcellular location">
    <subcellularLocation>
        <location evidence="2">Nucleus</location>
    </subcellularLocation>
</comment>
<comment type="tissue specificity">
    <text evidence="4">Expressed in roots, shoots and panicles.</text>
</comment>
<comment type="induction">
    <text evidence="4">Down-regulated by dehydration and salt stress.</text>
</comment>
<protein>
    <recommendedName>
        <fullName>Basic leucine zipper 2</fullName>
        <shortName>OsbZIP02</shortName>
        <shortName>bZIP protein 2</shortName>
    </recommendedName>
</protein>
<reference key="1">
    <citation type="journal article" date="2002" name="Nature">
        <title>The genome sequence and structure of rice chromosome 1.</title>
        <authorList>
            <person name="Sasaki T."/>
            <person name="Matsumoto T."/>
            <person name="Yamamoto K."/>
            <person name="Sakata K."/>
            <person name="Baba T."/>
            <person name="Katayose Y."/>
            <person name="Wu J."/>
            <person name="Niimura Y."/>
            <person name="Cheng Z."/>
            <person name="Nagamura Y."/>
            <person name="Antonio B.A."/>
            <person name="Kanamori H."/>
            <person name="Hosokawa S."/>
            <person name="Masukawa M."/>
            <person name="Arikawa K."/>
            <person name="Chiden Y."/>
            <person name="Hayashi M."/>
            <person name="Okamoto M."/>
            <person name="Ando T."/>
            <person name="Aoki H."/>
            <person name="Arita K."/>
            <person name="Hamada M."/>
            <person name="Harada C."/>
            <person name="Hijishita S."/>
            <person name="Honda M."/>
            <person name="Ichikawa Y."/>
            <person name="Idonuma A."/>
            <person name="Iijima M."/>
            <person name="Ikeda M."/>
            <person name="Ikeno M."/>
            <person name="Ito S."/>
            <person name="Ito T."/>
            <person name="Ito Y."/>
            <person name="Ito Y."/>
            <person name="Iwabuchi A."/>
            <person name="Kamiya K."/>
            <person name="Karasawa W."/>
            <person name="Katagiri S."/>
            <person name="Kikuta A."/>
            <person name="Kobayashi N."/>
            <person name="Kono I."/>
            <person name="Machita K."/>
            <person name="Maehara T."/>
            <person name="Mizuno H."/>
            <person name="Mizubayashi T."/>
            <person name="Mukai Y."/>
            <person name="Nagasaki H."/>
            <person name="Nakashima M."/>
            <person name="Nakama Y."/>
            <person name="Nakamichi Y."/>
            <person name="Nakamura M."/>
            <person name="Namiki N."/>
            <person name="Negishi M."/>
            <person name="Ohta I."/>
            <person name="Ono N."/>
            <person name="Saji S."/>
            <person name="Sakai K."/>
            <person name="Shibata M."/>
            <person name="Shimokawa T."/>
            <person name="Shomura A."/>
            <person name="Song J."/>
            <person name="Takazaki Y."/>
            <person name="Terasawa K."/>
            <person name="Tsuji K."/>
            <person name="Waki K."/>
            <person name="Yamagata H."/>
            <person name="Yamane H."/>
            <person name="Yoshiki S."/>
            <person name="Yoshihara R."/>
            <person name="Yukawa K."/>
            <person name="Zhong H."/>
            <person name="Iwama H."/>
            <person name="Endo T."/>
            <person name="Ito H."/>
            <person name="Hahn J.H."/>
            <person name="Kim H.-I."/>
            <person name="Eun M.-Y."/>
            <person name="Yano M."/>
            <person name="Jiang J."/>
            <person name="Gojobori T."/>
        </authorList>
    </citation>
    <scope>NUCLEOTIDE SEQUENCE [LARGE SCALE GENOMIC DNA]</scope>
    <source>
        <strain>cv. Nipponbare</strain>
    </source>
</reference>
<reference key="2">
    <citation type="journal article" date="2005" name="Nature">
        <title>The map-based sequence of the rice genome.</title>
        <authorList>
            <consortium name="International rice genome sequencing project (IRGSP)"/>
        </authorList>
    </citation>
    <scope>NUCLEOTIDE SEQUENCE [LARGE SCALE GENOMIC DNA]</scope>
    <source>
        <strain>cv. Nipponbare</strain>
    </source>
</reference>
<reference key="3">
    <citation type="journal article" date="2008" name="Nucleic Acids Res.">
        <title>The rice annotation project database (RAP-DB): 2008 update.</title>
        <authorList>
            <consortium name="The rice annotation project (RAP)"/>
        </authorList>
    </citation>
    <scope>GENOME REANNOTATION</scope>
    <source>
        <strain>cv. Nipponbare</strain>
    </source>
</reference>
<reference key="4">
    <citation type="journal article" date="2013" name="Rice">
        <title>Improvement of the Oryza sativa Nipponbare reference genome using next generation sequence and optical map data.</title>
        <authorList>
            <person name="Kawahara Y."/>
            <person name="de la Bastide M."/>
            <person name="Hamilton J.P."/>
            <person name="Kanamori H."/>
            <person name="McCombie W.R."/>
            <person name="Ouyang S."/>
            <person name="Schwartz D.C."/>
            <person name="Tanaka T."/>
            <person name="Wu J."/>
            <person name="Zhou S."/>
            <person name="Childs K.L."/>
            <person name="Davidson R.M."/>
            <person name="Lin H."/>
            <person name="Quesada-Ocampo L."/>
            <person name="Vaillancourt B."/>
            <person name="Sakai H."/>
            <person name="Lee S.S."/>
            <person name="Kim J."/>
            <person name="Numa H."/>
            <person name="Itoh T."/>
            <person name="Buell C.R."/>
            <person name="Matsumoto T."/>
        </authorList>
    </citation>
    <scope>GENOME REANNOTATION</scope>
    <source>
        <strain>cv. Nipponbare</strain>
    </source>
</reference>
<reference key="5">
    <citation type="journal article" date="2003" name="Science">
        <title>Collection, mapping, and annotation of over 28,000 cDNA clones from japonica rice.</title>
        <authorList>
            <consortium name="The rice full-length cDNA consortium"/>
        </authorList>
    </citation>
    <scope>NUCLEOTIDE SEQUENCE [LARGE SCALE MRNA]</scope>
    <source>
        <strain>cv. Nipponbare</strain>
    </source>
</reference>
<reference key="6">
    <citation type="journal article" date="2008" name="Plant Physiol.">
        <title>Genomic survey and gene expression analysis of the basic leucine zipper transcription factor family in rice.</title>
        <authorList>
            <person name="Nijhawan A."/>
            <person name="Jain M."/>
            <person name="Tyagi A.K."/>
            <person name="Khurana J.P."/>
        </authorList>
    </citation>
    <scope>TISSUE SPECIFICITY</scope>
    <scope>INDUCTION</scope>
    <scope>GENE FAMILY</scope>
    <scope>NOMENCLATURE</scope>
</reference>
<keyword id="KW-0238">DNA-binding</keyword>
<keyword id="KW-0539">Nucleus</keyword>
<keyword id="KW-1185">Reference proteome</keyword>
<keyword id="KW-0804">Transcription</keyword>
<keyword id="KW-0805">Transcription regulation</keyword>
<organism>
    <name type="scientific">Oryza sativa subsp. japonica</name>
    <name type="common">Rice</name>
    <dbReference type="NCBI Taxonomy" id="39947"/>
    <lineage>
        <taxon>Eukaryota</taxon>
        <taxon>Viridiplantae</taxon>
        <taxon>Streptophyta</taxon>
        <taxon>Embryophyta</taxon>
        <taxon>Tracheophyta</taxon>
        <taxon>Spermatophyta</taxon>
        <taxon>Magnoliopsida</taxon>
        <taxon>Liliopsida</taxon>
        <taxon>Poales</taxon>
        <taxon>Poaceae</taxon>
        <taxon>BOP clade</taxon>
        <taxon>Oryzoideae</taxon>
        <taxon>Oryzeae</taxon>
        <taxon>Oryzinae</taxon>
        <taxon>Oryza</taxon>
        <taxon>Oryza sativa</taxon>
    </lineage>
</organism>
<sequence>MAQLPPKIPTMATAWPEFGGGHHHHAAHGHHHQRSPSMGAFLAAPLPPFPLPPPAPANGGAQQQQQQQQHQPSWVDEFLDFSATKRGAHRRSVSDSVAFLDPVSDDNAGVGAHDFDRLDDDQLMSMFSDDLQPPPPQQQPAAPAASASSPSDHNSMNDEKQDKGETDEAQSECDGATPGQPASPATVDPKRVKRILANRQSAQRSRVRKLQYISELERSVTSLQTEVSALSPRVAFLDHQRSLLTLGNSHLKQRIAALAQDKIFKDGGTEEGDREAAANLPPAKPQERGIPTGGRGPGPRPRQCRPDRQRGGRRGRAMPALVIGRDPDAL</sequence>
<accession>Q5QNI5</accession>
<accession>A0A0P0UZS5</accession>
<evidence type="ECO:0000250" key="1"/>
<evidence type="ECO:0000255" key="2">
    <source>
        <dbReference type="PROSITE-ProRule" id="PRU00978"/>
    </source>
</evidence>
<evidence type="ECO:0000256" key="3">
    <source>
        <dbReference type="SAM" id="MobiDB-lite"/>
    </source>
</evidence>
<evidence type="ECO:0000269" key="4">
    <source>
    </source>
</evidence>
<evidence type="ECO:0000305" key="5"/>
<name>BZP02_ORYSJ</name>
<proteinExistence type="evidence at transcript level"/>
<feature type="chain" id="PRO_0000430355" description="Basic leucine zipper 2">
    <location>
        <begin position="1"/>
        <end position="330"/>
    </location>
</feature>
<feature type="domain" description="bZIP" evidence="2">
    <location>
        <begin position="188"/>
        <end position="244"/>
    </location>
</feature>
<feature type="region of interest" description="Disordered" evidence="3">
    <location>
        <begin position="1"/>
        <end position="207"/>
    </location>
</feature>
<feature type="region of interest" description="Basic motif" evidence="2">
    <location>
        <begin position="190"/>
        <end position="209"/>
    </location>
</feature>
<feature type="region of interest" description="Leucine-zipper" evidence="2">
    <location>
        <begin position="216"/>
        <end position="244"/>
    </location>
</feature>
<feature type="region of interest" description="Disordered" evidence="3">
    <location>
        <begin position="267"/>
        <end position="330"/>
    </location>
</feature>
<feature type="compositionally biased region" description="Basic residues" evidence="3">
    <location>
        <begin position="21"/>
        <end position="34"/>
    </location>
</feature>
<feature type="compositionally biased region" description="Pro residues" evidence="3">
    <location>
        <begin position="45"/>
        <end position="56"/>
    </location>
</feature>
<feature type="compositionally biased region" description="Low complexity" evidence="3">
    <location>
        <begin position="57"/>
        <end position="72"/>
    </location>
</feature>
<feature type="compositionally biased region" description="Low complexity" evidence="3">
    <location>
        <begin position="139"/>
        <end position="151"/>
    </location>
</feature>
<feature type="compositionally biased region" description="Basic and acidic residues" evidence="3">
    <location>
        <begin position="155"/>
        <end position="166"/>
    </location>
</feature>
<feature type="sequence conflict" description="In Ref. 5; AK100944." evidence="5" ref="5">
    <original>T</original>
    <variation>A</variation>
    <location>
        <position position="10"/>
    </location>
</feature>
<dbReference type="EMBL" id="AP002092">
    <property type="protein sequence ID" value="BAD73033.1"/>
    <property type="molecule type" value="Genomic_DNA"/>
</dbReference>
<dbReference type="EMBL" id="AP008207">
    <property type="protein sequence ID" value="BAF04289.1"/>
    <property type="molecule type" value="Genomic_DNA"/>
</dbReference>
<dbReference type="EMBL" id="AP014957">
    <property type="protein sequence ID" value="BAS70994.1"/>
    <property type="molecule type" value="Genomic_DNA"/>
</dbReference>
<dbReference type="EMBL" id="AK100944">
    <property type="status" value="NOT_ANNOTATED_CDS"/>
    <property type="molecule type" value="mRNA"/>
</dbReference>
<dbReference type="SMR" id="Q5QNI5"/>
<dbReference type="FunCoup" id="Q5QNI5">
    <property type="interactions" value="52"/>
</dbReference>
<dbReference type="STRING" id="39947.Q5QNI5"/>
<dbReference type="PaxDb" id="39947-Q5QNI5"/>
<dbReference type="EnsemblPlants" id="Os01t0211800-01">
    <property type="protein sequence ID" value="Os01t0211800-01"/>
    <property type="gene ID" value="Os01g0211800"/>
</dbReference>
<dbReference type="Gramene" id="Os01t0211800-01">
    <property type="protein sequence ID" value="Os01t0211800-01"/>
    <property type="gene ID" value="Os01g0211800"/>
</dbReference>
<dbReference type="KEGG" id="dosa:Os01g0211800"/>
<dbReference type="eggNOG" id="ENOG502QQW5">
    <property type="taxonomic scope" value="Eukaryota"/>
</dbReference>
<dbReference type="HOGENOM" id="CLU_059253_1_0_1"/>
<dbReference type="InParanoid" id="Q5QNI5"/>
<dbReference type="OMA" id="HNSMNDE"/>
<dbReference type="Proteomes" id="UP000000763">
    <property type="component" value="Chromosome 1"/>
</dbReference>
<dbReference type="Proteomes" id="UP000059680">
    <property type="component" value="Chromosome 1"/>
</dbReference>
<dbReference type="GO" id="GO:0005634">
    <property type="term" value="C:nucleus"/>
    <property type="evidence" value="ECO:0000318"/>
    <property type="project" value="GO_Central"/>
</dbReference>
<dbReference type="GO" id="GO:0003677">
    <property type="term" value="F:DNA binding"/>
    <property type="evidence" value="ECO:0000318"/>
    <property type="project" value="GO_Central"/>
</dbReference>
<dbReference type="GO" id="GO:0003700">
    <property type="term" value="F:DNA-binding transcription factor activity"/>
    <property type="evidence" value="ECO:0007669"/>
    <property type="project" value="InterPro"/>
</dbReference>
<dbReference type="GO" id="GO:0045893">
    <property type="term" value="P:positive regulation of DNA-templated transcription"/>
    <property type="evidence" value="ECO:0000318"/>
    <property type="project" value="GO_Central"/>
</dbReference>
<dbReference type="CDD" id="cd14703">
    <property type="entry name" value="bZIP_plant_RF2"/>
    <property type="match status" value="1"/>
</dbReference>
<dbReference type="FunFam" id="1.20.5.170:FF:000057">
    <property type="entry name" value="Basic leucine zipper 61"/>
    <property type="match status" value="1"/>
</dbReference>
<dbReference type="Gene3D" id="1.20.5.170">
    <property type="match status" value="1"/>
</dbReference>
<dbReference type="InterPro" id="IPR004827">
    <property type="entry name" value="bZIP"/>
</dbReference>
<dbReference type="InterPro" id="IPR044759">
    <property type="entry name" value="bZIP_RF2"/>
</dbReference>
<dbReference type="InterPro" id="IPR046347">
    <property type="entry name" value="bZIP_sf"/>
</dbReference>
<dbReference type="InterPro" id="IPR052483">
    <property type="entry name" value="bZIP_transcription_regulators"/>
</dbReference>
<dbReference type="PANTHER" id="PTHR46391">
    <property type="entry name" value="BASIC LEUCINE ZIPPER 34"/>
    <property type="match status" value="1"/>
</dbReference>
<dbReference type="PANTHER" id="PTHR46391:SF20">
    <property type="entry name" value="BASIC LEUCINE ZIPPER 61"/>
    <property type="match status" value="1"/>
</dbReference>
<dbReference type="Pfam" id="PF00170">
    <property type="entry name" value="bZIP_1"/>
    <property type="match status" value="1"/>
</dbReference>
<dbReference type="SMART" id="SM00338">
    <property type="entry name" value="BRLZ"/>
    <property type="match status" value="1"/>
</dbReference>
<dbReference type="SUPFAM" id="SSF57959">
    <property type="entry name" value="Leucine zipper domain"/>
    <property type="match status" value="1"/>
</dbReference>
<dbReference type="PROSITE" id="PS50217">
    <property type="entry name" value="BZIP"/>
    <property type="match status" value="1"/>
</dbReference>
<dbReference type="PROSITE" id="PS00036">
    <property type="entry name" value="BZIP_BASIC"/>
    <property type="match status" value="1"/>
</dbReference>
<gene>
    <name type="primary">BZIP02</name>
    <name type="ordered locus">Os01g0211800</name>
    <name type="ordered locus">LOC_Os01g11350</name>
    <name type="ORF">P0031E09.34</name>
</gene>